<accession>Q8VYB2</accession>
<accession>A8MQ84</accession>
<accession>Q9LG32</accession>
<name>UKL3_ARATH</name>
<dbReference type="EC" id="2.7.1.48"/>
<dbReference type="EC" id="2.4.2.9"/>
<dbReference type="EMBL" id="AC002304">
    <property type="protein sequence ID" value="AAF79310.1"/>
    <property type="status" value="ALT_SEQ"/>
    <property type="molecule type" value="Genomic_DNA"/>
</dbReference>
<dbReference type="EMBL" id="CP002684">
    <property type="protein sequence ID" value="AEE33300.1"/>
    <property type="molecule type" value="Genomic_DNA"/>
</dbReference>
<dbReference type="EMBL" id="CP002684">
    <property type="protein sequence ID" value="AEE33301.1"/>
    <property type="molecule type" value="Genomic_DNA"/>
</dbReference>
<dbReference type="EMBL" id="CP002684">
    <property type="protein sequence ID" value="AEE33302.1"/>
    <property type="molecule type" value="Genomic_DNA"/>
</dbReference>
<dbReference type="EMBL" id="CP002684">
    <property type="protein sequence ID" value="ANM61033.1"/>
    <property type="molecule type" value="Genomic_DNA"/>
</dbReference>
<dbReference type="EMBL" id="AY072218">
    <property type="protein sequence ID" value="AAL60039.1"/>
    <property type="molecule type" value="mRNA"/>
</dbReference>
<dbReference type="EMBL" id="AY122946">
    <property type="protein sequence ID" value="AAM67479.1"/>
    <property type="molecule type" value="mRNA"/>
</dbReference>
<dbReference type="EMBL" id="AK317232">
    <property type="protein sequence ID" value="BAH19913.1"/>
    <property type="molecule type" value="mRNA"/>
</dbReference>
<dbReference type="RefSeq" id="NP_001323277.1">
    <molecule id="Q8VYB2-1"/>
    <property type="nucleotide sequence ID" value="NM_001333736.1"/>
</dbReference>
<dbReference type="RefSeq" id="NP_175977.1">
    <molecule id="Q8VYB2-1"/>
    <property type="nucleotide sequence ID" value="NM_104458.4"/>
</dbReference>
<dbReference type="RefSeq" id="NP_974036.2">
    <molecule id="Q8VYB2-2"/>
    <property type="nucleotide sequence ID" value="NM_202307.3"/>
</dbReference>
<dbReference type="RefSeq" id="NP_974037.1">
    <molecule id="Q8VYB2-1"/>
    <property type="nucleotide sequence ID" value="NM_202308.2"/>
</dbReference>
<dbReference type="SMR" id="Q8VYB2"/>
<dbReference type="BioGRID" id="27256">
    <property type="interactions" value="1"/>
</dbReference>
<dbReference type="FunCoup" id="Q8VYB2">
    <property type="interactions" value="3490"/>
</dbReference>
<dbReference type="STRING" id="3702.Q8VYB2"/>
<dbReference type="PaxDb" id="3702-AT1G55810.3"/>
<dbReference type="ProteomicsDB" id="246396">
    <molecule id="Q8VYB2-1"/>
</dbReference>
<dbReference type="EnsemblPlants" id="AT1G55810.1">
    <molecule id="Q8VYB2-1"/>
    <property type="protein sequence ID" value="AT1G55810.1"/>
    <property type="gene ID" value="AT1G55810"/>
</dbReference>
<dbReference type="EnsemblPlants" id="AT1G55810.2">
    <molecule id="Q8VYB2-2"/>
    <property type="protein sequence ID" value="AT1G55810.2"/>
    <property type="gene ID" value="AT1G55810"/>
</dbReference>
<dbReference type="EnsemblPlants" id="AT1G55810.3">
    <molecule id="Q8VYB2-1"/>
    <property type="protein sequence ID" value="AT1G55810.3"/>
    <property type="gene ID" value="AT1G55810"/>
</dbReference>
<dbReference type="EnsemblPlants" id="AT1G55810.6">
    <molecule id="Q8VYB2-1"/>
    <property type="protein sequence ID" value="AT1G55810.6"/>
    <property type="gene ID" value="AT1G55810"/>
</dbReference>
<dbReference type="GeneID" id="842031"/>
<dbReference type="Gramene" id="AT1G55810.1">
    <molecule id="Q8VYB2-1"/>
    <property type="protein sequence ID" value="AT1G55810.1"/>
    <property type="gene ID" value="AT1G55810"/>
</dbReference>
<dbReference type="Gramene" id="AT1G55810.2">
    <molecule id="Q8VYB2-2"/>
    <property type="protein sequence ID" value="AT1G55810.2"/>
    <property type="gene ID" value="AT1G55810"/>
</dbReference>
<dbReference type="Gramene" id="AT1G55810.3">
    <molecule id="Q8VYB2-1"/>
    <property type="protein sequence ID" value="AT1G55810.3"/>
    <property type="gene ID" value="AT1G55810"/>
</dbReference>
<dbReference type="Gramene" id="AT1G55810.6">
    <molecule id="Q8VYB2-1"/>
    <property type="protein sequence ID" value="AT1G55810.6"/>
    <property type="gene ID" value="AT1G55810"/>
</dbReference>
<dbReference type="KEGG" id="ath:AT1G55810"/>
<dbReference type="Araport" id="AT1G55810"/>
<dbReference type="TAIR" id="AT1G55810">
    <property type="gene designation" value="UKL3"/>
</dbReference>
<dbReference type="eggNOG" id="KOG4203">
    <property type="taxonomic scope" value="Eukaryota"/>
</dbReference>
<dbReference type="InParanoid" id="Q8VYB2"/>
<dbReference type="OMA" id="MHKQPFI"/>
<dbReference type="PhylomeDB" id="Q8VYB2"/>
<dbReference type="SABIO-RK" id="Q8VYB2"/>
<dbReference type="UniPathway" id="UPA00574">
    <property type="reaction ID" value="UER00636"/>
</dbReference>
<dbReference type="UniPathway" id="UPA00574">
    <property type="reaction ID" value="UER00637"/>
</dbReference>
<dbReference type="UniPathway" id="UPA00579">
    <property type="reaction ID" value="UER00640"/>
</dbReference>
<dbReference type="PRO" id="PR:Q8VYB2"/>
<dbReference type="Proteomes" id="UP000006548">
    <property type="component" value="Chromosome 1"/>
</dbReference>
<dbReference type="ExpressionAtlas" id="Q8VYB2">
    <property type="expression patterns" value="baseline and differential"/>
</dbReference>
<dbReference type="GO" id="GO:0005524">
    <property type="term" value="F:ATP binding"/>
    <property type="evidence" value="ECO:0007669"/>
    <property type="project" value="InterPro"/>
</dbReference>
<dbReference type="GO" id="GO:0043771">
    <property type="term" value="F:cytidine kinase activity"/>
    <property type="evidence" value="ECO:0007669"/>
    <property type="project" value="RHEA"/>
</dbReference>
<dbReference type="GO" id="GO:0005525">
    <property type="term" value="F:GTP binding"/>
    <property type="evidence" value="ECO:0007669"/>
    <property type="project" value="UniProtKB-KW"/>
</dbReference>
<dbReference type="GO" id="GO:0004845">
    <property type="term" value="F:uracil phosphoribosyltransferase activity"/>
    <property type="evidence" value="ECO:0007669"/>
    <property type="project" value="UniProtKB-EC"/>
</dbReference>
<dbReference type="GO" id="GO:0004849">
    <property type="term" value="F:uridine kinase activity"/>
    <property type="evidence" value="ECO:0007669"/>
    <property type="project" value="UniProtKB-EC"/>
</dbReference>
<dbReference type="GO" id="GO:0071456">
    <property type="term" value="P:cellular response to hypoxia"/>
    <property type="evidence" value="ECO:0007007"/>
    <property type="project" value="TAIR"/>
</dbReference>
<dbReference type="GO" id="GO:0044211">
    <property type="term" value="P:CTP salvage"/>
    <property type="evidence" value="ECO:0007669"/>
    <property type="project" value="UniProtKB-UniPathway"/>
</dbReference>
<dbReference type="GO" id="GO:0044206">
    <property type="term" value="P:UMP salvage"/>
    <property type="evidence" value="ECO:0007669"/>
    <property type="project" value="UniProtKB-UniPathway"/>
</dbReference>
<dbReference type="CDD" id="cd06223">
    <property type="entry name" value="PRTases_typeI"/>
    <property type="match status" value="1"/>
</dbReference>
<dbReference type="CDD" id="cd02023">
    <property type="entry name" value="UMPK"/>
    <property type="match status" value="1"/>
</dbReference>
<dbReference type="FunFam" id="3.40.50.2020:FF:000015">
    <property type="entry name" value="Uridine kinase"/>
    <property type="match status" value="1"/>
</dbReference>
<dbReference type="FunFam" id="3.40.50.300:FF:000339">
    <property type="entry name" value="Uridine kinase"/>
    <property type="match status" value="1"/>
</dbReference>
<dbReference type="Gene3D" id="3.40.50.2020">
    <property type="match status" value="1"/>
</dbReference>
<dbReference type="Gene3D" id="3.40.50.300">
    <property type="entry name" value="P-loop containing nucleotide triphosphate hydrolases"/>
    <property type="match status" value="1"/>
</dbReference>
<dbReference type="InterPro" id="IPR027417">
    <property type="entry name" value="P-loop_NTPase"/>
</dbReference>
<dbReference type="InterPro" id="IPR000836">
    <property type="entry name" value="PRibTrfase_dom"/>
</dbReference>
<dbReference type="InterPro" id="IPR006083">
    <property type="entry name" value="PRK/URK"/>
</dbReference>
<dbReference type="InterPro" id="IPR029057">
    <property type="entry name" value="PRTase-like"/>
</dbReference>
<dbReference type="InterPro" id="IPR000764">
    <property type="entry name" value="Uridine_kinase-like"/>
</dbReference>
<dbReference type="NCBIfam" id="NF001097">
    <property type="entry name" value="PRK00129.1"/>
    <property type="match status" value="1"/>
</dbReference>
<dbReference type="NCBIfam" id="NF004018">
    <property type="entry name" value="PRK05480.1"/>
    <property type="match status" value="1"/>
</dbReference>
<dbReference type="NCBIfam" id="TIGR00235">
    <property type="entry name" value="udk"/>
    <property type="match status" value="1"/>
</dbReference>
<dbReference type="PANTHER" id="PTHR10285">
    <property type="entry name" value="URIDINE KINASE"/>
    <property type="match status" value="1"/>
</dbReference>
<dbReference type="Pfam" id="PF00485">
    <property type="entry name" value="PRK"/>
    <property type="match status" value="1"/>
</dbReference>
<dbReference type="Pfam" id="PF14681">
    <property type="entry name" value="UPRTase"/>
    <property type="match status" value="1"/>
</dbReference>
<dbReference type="PRINTS" id="PR00988">
    <property type="entry name" value="URIDINKINASE"/>
</dbReference>
<dbReference type="SUPFAM" id="SSF52540">
    <property type="entry name" value="P-loop containing nucleoside triphosphate hydrolases"/>
    <property type="match status" value="1"/>
</dbReference>
<dbReference type="SUPFAM" id="SSF53271">
    <property type="entry name" value="PRTase-like"/>
    <property type="match status" value="1"/>
</dbReference>
<gene>
    <name type="primary">UKL3</name>
    <name type="ordered locus">At1g55810</name>
    <name type="ORF">F20N2.21</name>
</gene>
<comment type="function">
    <text evidence="2">Involved in the pyrimidine salvage pathway. The uracil phosphoribosyltransferase (UPRT) activity, that catalyzes the conversion of uracil and 5-phospho-alpha-D-ribose 1-diphosphate (PRPP) to UMP and diphosphate, is unsure.</text>
</comment>
<comment type="catalytic activity">
    <reaction>
        <text>UMP + diphosphate = 5-phospho-alpha-D-ribose 1-diphosphate + uracil</text>
        <dbReference type="Rhea" id="RHEA:13017"/>
        <dbReference type="ChEBI" id="CHEBI:17568"/>
        <dbReference type="ChEBI" id="CHEBI:33019"/>
        <dbReference type="ChEBI" id="CHEBI:57865"/>
        <dbReference type="ChEBI" id="CHEBI:58017"/>
        <dbReference type="EC" id="2.4.2.9"/>
    </reaction>
</comment>
<comment type="catalytic activity">
    <reaction>
        <text>cytidine + ATP = CMP + ADP + H(+)</text>
        <dbReference type="Rhea" id="RHEA:24674"/>
        <dbReference type="ChEBI" id="CHEBI:15378"/>
        <dbReference type="ChEBI" id="CHEBI:17562"/>
        <dbReference type="ChEBI" id="CHEBI:30616"/>
        <dbReference type="ChEBI" id="CHEBI:60377"/>
        <dbReference type="ChEBI" id="CHEBI:456216"/>
        <dbReference type="EC" id="2.7.1.48"/>
    </reaction>
</comment>
<comment type="catalytic activity">
    <reaction>
        <text>uridine + ATP = UMP + ADP + H(+)</text>
        <dbReference type="Rhea" id="RHEA:16825"/>
        <dbReference type="ChEBI" id="CHEBI:15378"/>
        <dbReference type="ChEBI" id="CHEBI:16704"/>
        <dbReference type="ChEBI" id="CHEBI:30616"/>
        <dbReference type="ChEBI" id="CHEBI:57865"/>
        <dbReference type="ChEBI" id="CHEBI:456216"/>
        <dbReference type="EC" id="2.7.1.48"/>
    </reaction>
</comment>
<comment type="cofactor">
    <cofactor evidence="1">
        <name>Mg(2+)</name>
        <dbReference type="ChEBI" id="CHEBI:18420"/>
    </cofactor>
    <text evidence="1">Binds 1 Mg(2+) ion per subunit. The magnesium is bound as Mg-PRPP.</text>
</comment>
<comment type="activity regulation">
    <text evidence="1">Allosterically activated by GTP.</text>
</comment>
<comment type="pathway">
    <text>Pyrimidine metabolism; UMP biosynthesis via salvage pathway; UMP from uracil: step 1/1.</text>
</comment>
<comment type="pathway">
    <text>Pyrimidine metabolism; CTP biosynthesis via salvage pathway; CTP from cytidine: step 1/3.</text>
</comment>
<comment type="pathway">
    <text>Pyrimidine metabolism; UMP biosynthesis via salvage pathway; UMP from uridine: step 1/1.</text>
</comment>
<comment type="alternative products">
    <event type="alternative splicing"/>
    <isoform>
        <id>Q8VYB2-1</id>
        <name>1</name>
        <sequence type="displayed"/>
    </isoform>
    <isoform>
        <id>Q8VYB2-2</id>
        <name>2</name>
        <sequence type="described" ref="VSP_039280"/>
    </isoform>
</comment>
<comment type="disruption phenotype">
    <text evidence="2">No visible phenotype. No decrease in uracil phosphoribosyltransferase activity.</text>
</comment>
<comment type="similarity">
    <text evidence="3">In the N-terminal section; belongs to the uridine kinase family.</text>
</comment>
<comment type="similarity">
    <text evidence="3">In the C-terminal section; belongs to the UPRTase family.</text>
</comment>
<comment type="sequence caution" evidence="3">
    <conflict type="erroneous gene model prediction">
        <sequence resource="EMBL-CDS" id="AAF79310"/>
    </conflict>
</comment>
<proteinExistence type="evidence at transcript level"/>
<organism>
    <name type="scientific">Arabidopsis thaliana</name>
    <name type="common">Mouse-ear cress</name>
    <dbReference type="NCBI Taxonomy" id="3702"/>
    <lineage>
        <taxon>Eukaryota</taxon>
        <taxon>Viridiplantae</taxon>
        <taxon>Streptophyta</taxon>
        <taxon>Embryophyta</taxon>
        <taxon>Tracheophyta</taxon>
        <taxon>Spermatophyta</taxon>
        <taxon>Magnoliopsida</taxon>
        <taxon>eudicotyledons</taxon>
        <taxon>Gunneridae</taxon>
        <taxon>Pentapetalae</taxon>
        <taxon>rosids</taxon>
        <taxon>malvids</taxon>
        <taxon>Brassicales</taxon>
        <taxon>Brassicaceae</taxon>
        <taxon>Camelineae</taxon>
        <taxon>Arabidopsis</taxon>
    </lineage>
</organism>
<protein>
    <recommendedName>
        <fullName>Uridine kinase-like protein 3</fullName>
    </recommendedName>
    <domain>
        <recommendedName>
            <fullName>Uridine kinase</fullName>
            <shortName>UK</shortName>
            <ecNumber>2.7.1.48</ecNumber>
        </recommendedName>
    </domain>
    <domain>
        <recommendedName>
            <fullName>Putative uracil phosphoribosyltransferase</fullName>
            <shortName>UPRTase</shortName>
            <ecNumber>2.4.2.9</ecNumber>
        </recommendedName>
        <alternativeName>
            <fullName>UMP pyrophosphorylase</fullName>
        </alternativeName>
    </domain>
</protein>
<keyword id="KW-0021">Allosteric enzyme</keyword>
<keyword id="KW-0025">Alternative splicing</keyword>
<keyword id="KW-0328">Glycosyltransferase</keyword>
<keyword id="KW-0342">GTP-binding</keyword>
<keyword id="KW-0418">Kinase</keyword>
<keyword id="KW-0511">Multifunctional enzyme</keyword>
<keyword id="KW-0547">Nucleotide-binding</keyword>
<keyword id="KW-1185">Reference proteome</keyword>
<keyword id="KW-0808">Transferase</keyword>
<sequence length="466" mass="52443">MASKSDVNIIETSSKVHFSGFHQMDGLASNRPEQMAEEEEHGQPFVIGVAGGAASGKTTVCDMIMQQLHDQRAVVVNQDSFYHNVNEVELVRVHDYNFDHPDAFDTEQLLSSMEKLRKGQAVDIPNYDFKSYKNNVFPPRRVNPSDVIILEGILIFHDPRVRDLMNMKIFVDADADVRLARRIKRDTVEKGRDIATVLDQYSKFVKPAFEDFILPTKKYADIIIPRGGDNHVAIDLIVQHIHTKLGQHDLCKIYPNLYVIQSTFQIRGMHTLIRDSKTTKHDFIFYSDRLIRLVVEHGLGHLPFTEKQVVTPTGSVYSGVDFCKKLCGVSVIRSGESMENALRACCKGIKIGKILIHREGDNGQQLIYEKLPSDISERHVLLLDPILGTGNSAVQAIRLLISKGVPESNIIFLNLISAPEGVNVVCKKFPRIKIVTSEIELGLNDEFRVVPGMGEFGDRYFGTDDE</sequence>
<feature type="chain" id="PRO_0000394516" description="Uridine kinase-like protein 3">
    <location>
        <begin position="1"/>
        <end position="466"/>
    </location>
</feature>
<feature type="region of interest" description="Uridine kinase" evidence="1">
    <location>
        <begin position="41"/>
        <end position="246"/>
    </location>
</feature>
<feature type="region of interest" description="Uracil phosphoribosyltransferase" evidence="1">
    <location>
        <begin position="256"/>
        <end position="466"/>
    </location>
</feature>
<feature type="binding site" evidence="1">
    <location>
        <position position="280"/>
    </location>
    <ligand>
        <name>GTP</name>
        <dbReference type="ChEBI" id="CHEBI:37565"/>
    </ligand>
</feature>
<feature type="binding site" evidence="1">
    <location>
        <position position="289"/>
    </location>
    <ligand>
        <name>GTP</name>
        <dbReference type="ChEBI" id="CHEBI:37565"/>
    </ligand>
</feature>
<feature type="binding site" evidence="1">
    <location>
        <begin position="323"/>
        <end position="326"/>
    </location>
    <ligand>
        <name>GTP</name>
        <dbReference type="ChEBI" id="CHEBI:37565"/>
    </ligand>
</feature>
<feature type="binding site" evidence="1">
    <location>
        <position position="333"/>
    </location>
    <ligand>
        <name>5-phospho-alpha-D-ribose 1-diphosphate</name>
        <dbReference type="ChEBI" id="CHEBI:58017"/>
    </ligand>
</feature>
<feature type="binding site" evidence="1">
    <location>
        <position position="358"/>
    </location>
    <ligand>
        <name>5-phospho-alpha-D-ribose 1-diphosphate</name>
        <dbReference type="ChEBI" id="CHEBI:58017"/>
    </ligand>
</feature>
<feature type="binding site" evidence="1">
    <location>
        <position position="378"/>
    </location>
    <ligand>
        <name>GTP</name>
        <dbReference type="ChEBI" id="CHEBI:37565"/>
    </ligand>
</feature>
<feature type="binding site" evidence="1">
    <location>
        <position position="384"/>
    </location>
    <ligand>
        <name>5-phospho-alpha-D-ribose 1-diphosphate</name>
        <dbReference type="ChEBI" id="CHEBI:58017"/>
    </ligand>
</feature>
<feature type="binding site" evidence="1">
    <location>
        <begin position="389"/>
        <end position="392"/>
    </location>
    <ligand>
        <name>5-phospho-alpha-D-ribose 1-diphosphate</name>
        <dbReference type="ChEBI" id="CHEBI:58017"/>
    </ligand>
</feature>
<feature type="binding site" evidence="1">
    <location>
        <begin position="454"/>
        <end position="456"/>
    </location>
    <ligand>
        <name>uracil</name>
        <dbReference type="ChEBI" id="CHEBI:17568"/>
    </ligand>
</feature>
<feature type="binding site" evidence="1">
    <location>
        <position position="455"/>
    </location>
    <ligand>
        <name>5-phospho-alpha-D-ribose 1-diphosphate</name>
        <dbReference type="ChEBI" id="CHEBI:58017"/>
    </ligand>
</feature>
<feature type="splice variant" id="VSP_039280" description="In isoform 2." evidence="3">
    <location>
        <begin position="366"/>
        <end position="370"/>
    </location>
</feature>
<evidence type="ECO:0000250" key="1"/>
<evidence type="ECO:0000269" key="2">
    <source>
    </source>
</evidence>
<evidence type="ECO:0000305" key="3"/>
<reference key="1">
    <citation type="journal article" date="2000" name="Nature">
        <title>Sequence and analysis of chromosome 1 of the plant Arabidopsis thaliana.</title>
        <authorList>
            <person name="Theologis A."/>
            <person name="Ecker J.R."/>
            <person name="Palm C.J."/>
            <person name="Federspiel N.A."/>
            <person name="Kaul S."/>
            <person name="White O."/>
            <person name="Alonso J."/>
            <person name="Altafi H."/>
            <person name="Araujo R."/>
            <person name="Bowman C.L."/>
            <person name="Brooks S.Y."/>
            <person name="Buehler E."/>
            <person name="Chan A."/>
            <person name="Chao Q."/>
            <person name="Chen H."/>
            <person name="Cheuk R.F."/>
            <person name="Chin C.W."/>
            <person name="Chung M.K."/>
            <person name="Conn L."/>
            <person name="Conway A.B."/>
            <person name="Conway A.R."/>
            <person name="Creasy T.H."/>
            <person name="Dewar K."/>
            <person name="Dunn P."/>
            <person name="Etgu P."/>
            <person name="Feldblyum T.V."/>
            <person name="Feng J.-D."/>
            <person name="Fong B."/>
            <person name="Fujii C.Y."/>
            <person name="Gill J.E."/>
            <person name="Goldsmith A.D."/>
            <person name="Haas B."/>
            <person name="Hansen N.F."/>
            <person name="Hughes B."/>
            <person name="Huizar L."/>
            <person name="Hunter J.L."/>
            <person name="Jenkins J."/>
            <person name="Johnson-Hopson C."/>
            <person name="Khan S."/>
            <person name="Khaykin E."/>
            <person name="Kim C.J."/>
            <person name="Koo H.L."/>
            <person name="Kremenetskaia I."/>
            <person name="Kurtz D.B."/>
            <person name="Kwan A."/>
            <person name="Lam B."/>
            <person name="Langin-Hooper S."/>
            <person name="Lee A."/>
            <person name="Lee J.M."/>
            <person name="Lenz C.A."/>
            <person name="Li J.H."/>
            <person name="Li Y.-P."/>
            <person name="Lin X."/>
            <person name="Liu S.X."/>
            <person name="Liu Z.A."/>
            <person name="Luros J.S."/>
            <person name="Maiti R."/>
            <person name="Marziali A."/>
            <person name="Militscher J."/>
            <person name="Miranda M."/>
            <person name="Nguyen M."/>
            <person name="Nierman W.C."/>
            <person name="Osborne B.I."/>
            <person name="Pai G."/>
            <person name="Peterson J."/>
            <person name="Pham P.K."/>
            <person name="Rizzo M."/>
            <person name="Rooney T."/>
            <person name="Rowley D."/>
            <person name="Sakano H."/>
            <person name="Salzberg S.L."/>
            <person name="Schwartz J.R."/>
            <person name="Shinn P."/>
            <person name="Southwick A.M."/>
            <person name="Sun H."/>
            <person name="Tallon L.J."/>
            <person name="Tambunga G."/>
            <person name="Toriumi M.J."/>
            <person name="Town C.D."/>
            <person name="Utterback T."/>
            <person name="Van Aken S."/>
            <person name="Vaysberg M."/>
            <person name="Vysotskaia V.S."/>
            <person name="Walker M."/>
            <person name="Wu D."/>
            <person name="Yu G."/>
            <person name="Fraser C.M."/>
            <person name="Venter J.C."/>
            <person name="Davis R.W."/>
        </authorList>
    </citation>
    <scope>NUCLEOTIDE SEQUENCE [LARGE SCALE GENOMIC DNA]</scope>
    <source>
        <strain>cv. Columbia</strain>
    </source>
</reference>
<reference key="2">
    <citation type="journal article" date="2017" name="Plant J.">
        <title>Araport11: a complete reannotation of the Arabidopsis thaliana reference genome.</title>
        <authorList>
            <person name="Cheng C.Y."/>
            <person name="Krishnakumar V."/>
            <person name="Chan A.P."/>
            <person name="Thibaud-Nissen F."/>
            <person name="Schobel S."/>
            <person name="Town C.D."/>
        </authorList>
    </citation>
    <scope>GENOME REANNOTATION</scope>
    <source>
        <strain>cv. Columbia</strain>
    </source>
</reference>
<reference key="3">
    <citation type="journal article" date="2003" name="Science">
        <title>Empirical analysis of transcriptional activity in the Arabidopsis genome.</title>
        <authorList>
            <person name="Yamada K."/>
            <person name="Lim J."/>
            <person name="Dale J.M."/>
            <person name="Chen H."/>
            <person name="Shinn P."/>
            <person name="Palm C.J."/>
            <person name="Southwick A.M."/>
            <person name="Wu H.C."/>
            <person name="Kim C.J."/>
            <person name="Nguyen M."/>
            <person name="Pham P.K."/>
            <person name="Cheuk R.F."/>
            <person name="Karlin-Newmann G."/>
            <person name="Liu S.X."/>
            <person name="Lam B."/>
            <person name="Sakano H."/>
            <person name="Wu T."/>
            <person name="Yu G."/>
            <person name="Miranda M."/>
            <person name="Quach H.L."/>
            <person name="Tripp M."/>
            <person name="Chang C.H."/>
            <person name="Lee J.M."/>
            <person name="Toriumi M.J."/>
            <person name="Chan M.M."/>
            <person name="Tang C.C."/>
            <person name="Onodera C.S."/>
            <person name="Deng J.M."/>
            <person name="Akiyama K."/>
            <person name="Ansari Y."/>
            <person name="Arakawa T."/>
            <person name="Banh J."/>
            <person name="Banno F."/>
            <person name="Bowser L."/>
            <person name="Brooks S.Y."/>
            <person name="Carninci P."/>
            <person name="Chao Q."/>
            <person name="Choy N."/>
            <person name="Enju A."/>
            <person name="Goldsmith A.D."/>
            <person name="Gurjal M."/>
            <person name="Hansen N.F."/>
            <person name="Hayashizaki Y."/>
            <person name="Johnson-Hopson C."/>
            <person name="Hsuan V.W."/>
            <person name="Iida K."/>
            <person name="Karnes M."/>
            <person name="Khan S."/>
            <person name="Koesema E."/>
            <person name="Ishida J."/>
            <person name="Jiang P.X."/>
            <person name="Jones T."/>
            <person name="Kawai J."/>
            <person name="Kamiya A."/>
            <person name="Meyers C."/>
            <person name="Nakajima M."/>
            <person name="Narusaka M."/>
            <person name="Seki M."/>
            <person name="Sakurai T."/>
            <person name="Satou M."/>
            <person name="Tamse R."/>
            <person name="Vaysberg M."/>
            <person name="Wallender E.K."/>
            <person name="Wong C."/>
            <person name="Yamamura Y."/>
            <person name="Yuan S."/>
            <person name="Shinozaki K."/>
            <person name="Davis R.W."/>
            <person name="Theologis A."/>
            <person name="Ecker J.R."/>
        </authorList>
    </citation>
    <scope>NUCLEOTIDE SEQUENCE [LARGE SCALE MRNA] (ISOFORM 1)</scope>
    <source>
        <strain>cv. Columbia</strain>
    </source>
</reference>
<reference key="4">
    <citation type="journal article" date="2009" name="DNA Res.">
        <title>Analysis of multiple occurrences of alternative splicing events in Arabidopsis thaliana using novel sequenced full-length cDNAs.</title>
        <authorList>
            <person name="Iida K."/>
            <person name="Fukami-Kobayashi K."/>
            <person name="Toyoda A."/>
            <person name="Sakaki Y."/>
            <person name="Kobayashi M."/>
            <person name="Seki M."/>
            <person name="Shinozaki K."/>
        </authorList>
    </citation>
    <scope>NUCLEOTIDE SEQUENCE [LARGE SCALE MRNA] (ISOFORM 1)</scope>
    <source>
        <tissue>Rosette leaf</tissue>
    </source>
</reference>
<reference key="5">
    <citation type="journal article" date="2009" name="Plant J.">
        <title>Uracil salvage is necessary for early Arabidopsis development.</title>
        <authorList>
            <person name="Mainguet S.E."/>
            <person name="Gakiere B."/>
            <person name="Majira A."/>
            <person name="Pelletier S."/>
            <person name="Bringel F."/>
            <person name="Guerard F."/>
            <person name="Caboche M."/>
            <person name="Berthome R."/>
            <person name="Renou J.P."/>
        </authorList>
    </citation>
    <scope>FUNCTION</scope>
    <scope>DISRUPTION PHENOTYPE</scope>
    <scope>GENE FAMILY</scope>
    <scope>NOMENCLATURE</scope>
</reference>